<name>MALT_YERPS</name>
<keyword id="KW-0010">Activator</keyword>
<keyword id="KW-0067">ATP-binding</keyword>
<keyword id="KW-0119">Carbohydrate metabolism</keyword>
<keyword id="KW-0238">DNA-binding</keyword>
<keyword id="KW-0547">Nucleotide-binding</keyword>
<keyword id="KW-0804">Transcription</keyword>
<keyword id="KW-0805">Transcription regulation</keyword>
<proteinExistence type="inferred from homology"/>
<feature type="chain" id="PRO_1000085787" description="HTH-type transcriptional regulator MalT">
    <location>
        <begin position="1"/>
        <end position="903"/>
    </location>
</feature>
<feature type="domain" description="HTH luxR-type" evidence="1">
    <location>
        <begin position="832"/>
        <end position="897"/>
    </location>
</feature>
<feature type="DNA-binding region" description="H-T-H motif" evidence="1">
    <location>
        <begin position="856"/>
        <end position="875"/>
    </location>
</feature>
<feature type="binding site" evidence="1">
    <location>
        <begin position="39"/>
        <end position="46"/>
    </location>
    <ligand>
        <name>ATP</name>
        <dbReference type="ChEBI" id="CHEBI:30616"/>
    </ligand>
</feature>
<evidence type="ECO:0000255" key="1">
    <source>
        <dbReference type="HAMAP-Rule" id="MF_01247"/>
    </source>
</evidence>
<organism>
    <name type="scientific">Yersinia pseudotuberculosis serotype I (strain IP32953)</name>
    <dbReference type="NCBI Taxonomy" id="273123"/>
    <lineage>
        <taxon>Bacteria</taxon>
        <taxon>Pseudomonadati</taxon>
        <taxon>Pseudomonadota</taxon>
        <taxon>Gammaproteobacteria</taxon>
        <taxon>Enterobacterales</taxon>
        <taxon>Yersiniaceae</taxon>
        <taxon>Yersinia</taxon>
    </lineage>
</organism>
<sequence>MLIPSKLSRPVRLQNTVVRDRLLVKLSSAANYRLTLINCPAGYGKTTLIAQWAADQSNLGWYSLDESDNQSERFATYLIAAIQLATGGHCSKSEALSQKHQYANLSALFSQLFIELSNWDGPLYLVIDDYHLITNDAIHEAMRFFLRHQPENLTLIILSRTLPSLGIANLRVRDQLLELGMQQLAFNHHEAQQFFECRLSSPLEQGDSSRLCDEVEGWVTALQLIALSSRQPNSSAQKSAKRLAGLNASHLSDYLVDEVLDQVDSKARAFLLRCSVLRSMNDALIVRLTGEDNGQQLLEELERQGLFIHRMDDSAEWFCFHPLFATFLRQRCQWELALELPELHHAAAEGWMALGYPAEAIHHALAAGDVGMLRDILLQHAWSLFHHSELALLEQCLTALPYPLLVQNPELALLQAWLAQSQHRYSEVNTLLEQAELAMQERKIPVDEILRAEFGALRAQVAINAGKPDEAEKLATDALKYLPMAHYYSRIVATSVTGEVHHCKGELARALPMMQQTEQMARRHEAYHYALWALLQQSEILIAQGFLQAAYETQEKAFELIREQHLEQLPMHEFLLRIRSQVLWSWSRLDEAEEAARKGVEILANYQPQQQLQCLAMLAKCSLARGDLDNANVYIQRCEALQHGSQYHLDWITNADKPRVIHWQMTGDKVAAASWLRQTEKPGMADNHFLQGQWRNIARVQIILGRFDEAEVVLDELNENARRLRLTSDLNRNLLLSNTLYWQTERKGEAQKALIESLTLANRTGFISHFVIEGEAMAQQLRQLIQLNALPELEQHRAQRILKDINQHHRHKFAHFDEIFVDKLLTHPQVPELIRTSPLTQREWQVLGLIYSGYSNDQIANELDVAATTIKTHIRNLYQKLGVAHRQEAVQQAQRLLQMMGYV</sequence>
<protein>
    <recommendedName>
        <fullName evidence="1">HTH-type transcriptional regulator MalT</fullName>
    </recommendedName>
    <alternativeName>
        <fullName evidence="1">ATP-dependent transcriptional activator MalT</fullName>
    </alternativeName>
</protein>
<reference key="1">
    <citation type="journal article" date="2004" name="Proc. Natl. Acad. Sci. U.S.A.">
        <title>Insights into the evolution of Yersinia pestis through whole-genome comparison with Yersinia pseudotuberculosis.</title>
        <authorList>
            <person name="Chain P.S.G."/>
            <person name="Carniel E."/>
            <person name="Larimer F.W."/>
            <person name="Lamerdin J."/>
            <person name="Stoutland P.O."/>
            <person name="Regala W.M."/>
            <person name="Georgescu A.M."/>
            <person name="Vergez L.M."/>
            <person name="Land M.L."/>
            <person name="Motin V.L."/>
            <person name="Brubaker R.R."/>
            <person name="Fowler J."/>
            <person name="Hinnebusch J."/>
            <person name="Marceau M."/>
            <person name="Medigue C."/>
            <person name="Simonet M."/>
            <person name="Chenal-Francisque V."/>
            <person name="Souza B."/>
            <person name="Dacheux D."/>
            <person name="Elliott J.M."/>
            <person name="Derbise A."/>
            <person name="Hauser L.J."/>
            <person name="Garcia E."/>
        </authorList>
    </citation>
    <scope>NUCLEOTIDE SEQUENCE [LARGE SCALE GENOMIC DNA]</scope>
    <source>
        <strain>IP32953</strain>
    </source>
</reference>
<comment type="function">
    <text evidence="1">Positively regulates the transcription of the maltose regulon whose gene products are responsible for uptake and catabolism of malto-oligosaccharides. Specifically binds to the promoter region of its target genes, recognizing a short DNA motif called the MalT box.</text>
</comment>
<comment type="activity regulation">
    <text evidence="1">Activated by ATP and maltotriose, which are both required for DNA binding.</text>
</comment>
<comment type="subunit">
    <text evidence="1">Monomer in solution. Oligomerizes to an active state in the presence of the positive effectors ATP and maltotriose.</text>
</comment>
<comment type="similarity">
    <text evidence="1">Belongs to the MalT family.</text>
</comment>
<gene>
    <name evidence="1" type="primary">malT</name>
    <name type="ordered locus">YPTB3776</name>
</gene>
<dbReference type="EMBL" id="BX936398">
    <property type="protein sequence ID" value="CAH23014.1"/>
    <property type="molecule type" value="Genomic_DNA"/>
</dbReference>
<dbReference type="RefSeq" id="WP_002208926.1">
    <property type="nucleotide sequence ID" value="NZ_CP009712.1"/>
</dbReference>
<dbReference type="SMR" id="Q664J3"/>
<dbReference type="GeneID" id="57974475"/>
<dbReference type="KEGG" id="ypo:BZ17_2809"/>
<dbReference type="KEGG" id="yps:YPTB3776"/>
<dbReference type="PATRIC" id="fig|273123.14.peg.2948"/>
<dbReference type="Proteomes" id="UP000001011">
    <property type="component" value="Chromosome"/>
</dbReference>
<dbReference type="GO" id="GO:0005524">
    <property type="term" value="F:ATP binding"/>
    <property type="evidence" value="ECO:0007669"/>
    <property type="project" value="UniProtKB-UniRule"/>
</dbReference>
<dbReference type="GO" id="GO:0003677">
    <property type="term" value="F:DNA binding"/>
    <property type="evidence" value="ECO:0007669"/>
    <property type="project" value="UniProtKB-KW"/>
</dbReference>
<dbReference type="GO" id="GO:0003700">
    <property type="term" value="F:DNA-binding transcription factor activity"/>
    <property type="evidence" value="ECO:0007669"/>
    <property type="project" value="UniProtKB-UniRule"/>
</dbReference>
<dbReference type="GO" id="GO:0045913">
    <property type="term" value="P:positive regulation of carbohydrate metabolic process"/>
    <property type="evidence" value="ECO:0007669"/>
    <property type="project" value="UniProtKB-UniRule"/>
</dbReference>
<dbReference type="GO" id="GO:0045893">
    <property type="term" value="P:positive regulation of DNA-templated transcription"/>
    <property type="evidence" value="ECO:0007669"/>
    <property type="project" value="UniProtKB-UniRule"/>
</dbReference>
<dbReference type="CDD" id="cd06170">
    <property type="entry name" value="LuxR_C_like"/>
    <property type="match status" value="1"/>
</dbReference>
<dbReference type="FunFam" id="1.10.10.10:FF:000115">
    <property type="entry name" value="HTH-type transcriptional regulator MalT"/>
    <property type="match status" value="1"/>
</dbReference>
<dbReference type="Gene3D" id="1.25.40.10">
    <property type="entry name" value="Tetratricopeptide repeat domain"/>
    <property type="match status" value="1"/>
</dbReference>
<dbReference type="Gene3D" id="1.10.10.10">
    <property type="entry name" value="Winged helix-like DNA-binding domain superfamily/Winged helix DNA-binding domain"/>
    <property type="match status" value="1"/>
</dbReference>
<dbReference type="HAMAP" id="MF_01247">
    <property type="entry name" value="HTH_type_MalT"/>
    <property type="match status" value="1"/>
</dbReference>
<dbReference type="InterPro" id="IPR027417">
    <property type="entry name" value="P-loop_NTPase"/>
</dbReference>
<dbReference type="InterPro" id="IPR016032">
    <property type="entry name" value="Sig_transdc_resp-reg_C-effctor"/>
</dbReference>
<dbReference type="InterPro" id="IPR011990">
    <property type="entry name" value="TPR-like_helical_dom_sf"/>
</dbReference>
<dbReference type="InterPro" id="IPR041617">
    <property type="entry name" value="TPR_MalT"/>
</dbReference>
<dbReference type="InterPro" id="IPR023768">
    <property type="entry name" value="Tscrpt_reg_HTH_MalT"/>
</dbReference>
<dbReference type="InterPro" id="IPR000792">
    <property type="entry name" value="Tscrpt_reg_LuxR_C"/>
</dbReference>
<dbReference type="InterPro" id="IPR036388">
    <property type="entry name" value="WH-like_DNA-bd_sf"/>
</dbReference>
<dbReference type="NCBIfam" id="NF003420">
    <property type="entry name" value="PRK04841.1"/>
    <property type="match status" value="1"/>
</dbReference>
<dbReference type="PANTHER" id="PTHR44688">
    <property type="entry name" value="DNA-BINDING TRANSCRIPTIONAL ACTIVATOR DEVR_DOSR"/>
    <property type="match status" value="1"/>
</dbReference>
<dbReference type="PANTHER" id="PTHR44688:SF16">
    <property type="entry name" value="DNA-BINDING TRANSCRIPTIONAL ACTIVATOR DEVR_DOSR"/>
    <property type="match status" value="1"/>
</dbReference>
<dbReference type="Pfam" id="PF00196">
    <property type="entry name" value="GerE"/>
    <property type="match status" value="1"/>
</dbReference>
<dbReference type="Pfam" id="PF17874">
    <property type="entry name" value="TPR_MalT"/>
    <property type="match status" value="1"/>
</dbReference>
<dbReference type="PRINTS" id="PR00038">
    <property type="entry name" value="HTHLUXR"/>
</dbReference>
<dbReference type="SMART" id="SM00421">
    <property type="entry name" value="HTH_LUXR"/>
    <property type="match status" value="1"/>
</dbReference>
<dbReference type="SUPFAM" id="SSF46894">
    <property type="entry name" value="C-terminal effector domain of the bipartite response regulators"/>
    <property type="match status" value="1"/>
</dbReference>
<dbReference type="SUPFAM" id="SSF52540">
    <property type="entry name" value="P-loop containing nucleoside triphosphate hydrolases"/>
    <property type="match status" value="1"/>
</dbReference>
<dbReference type="SUPFAM" id="SSF48452">
    <property type="entry name" value="TPR-like"/>
    <property type="match status" value="1"/>
</dbReference>
<dbReference type="PROSITE" id="PS00622">
    <property type="entry name" value="HTH_LUXR_1"/>
    <property type="match status" value="1"/>
</dbReference>
<dbReference type="PROSITE" id="PS50043">
    <property type="entry name" value="HTH_LUXR_2"/>
    <property type="match status" value="1"/>
</dbReference>
<accession>Q664J3</accession>